<reference key="1">
    <citation type="journal article" date="1996" name="Immunogenetics">
        <title>Molecular cloning and sequencing of interleukin 6 cDNA fragments from the harbor seal (Phoca vitulina), killer whale (Orcinus orca), and Southern sea otter (Enhydra lutris nereis).</title>
        <authorList>
            <person name="King D.P."/>
            <person name="Schrenzel M.D."/>
            <person name="McKnight M.L."/>
            <person name="Reidarson T.H."/>
            <person name="Hanni K.D."/>
            <person name="Stott J.L."/>
            <person name="Ferrick D.A."/>
        </authorList>
    </citation>
    <scope>NUCLEOTIDE SEQUENCE [MRNA]</scope>
</reference>
<sequence>RFTSAFSLGLLLVTATAFPTPGPLGEDFKDDTTSDRLYLTSPDKTEALIKYILGKISAMRKEMCEKYDKCENSKEALAENNLNLPKMAEKDGCFQSGFNQETCLMRITTGLLEYQIYLDYLQNEYEGDKEAIEAVQISSKALAQILRQKVKNPDEVTTPDPTTNASLMNNLQSQNDDWMKNTKIILILRSLENFLQFSLRAIRIK</sequence>
<dbReference type="EMBL" id="L46803">
    <property type="protein sequence ID" value="AAB01429.1"/>
    <property type="molecule type" value="mRNA"/>
</dbReference>
<dbReference type="SMR" id="Q28747"/>
<dbReference type="GlyCosmos" id="Q28747">
    <property type="glycosylation" value="1 site, No reported glycans"/>
</dbReference>
<dbReference type="GO" id="GO:0005615">
    <property type="term" value="C:extracellular space"/>
    <property type="evidence" value="ECO:0007669"/>
    <property type="project" value="UniProtKB-KW"/>
</dbReference>
<dbReference type="GO" id="GO:0005896">
    <property type="term" value="C:interleukin-6 receptor complex"/>
    <property type="evidence" value="ECO:0007669"/>
    <property type="project" value="TreeGrafter"/>
</dbReference>
<dbReference type="GO" id="GO:0005125">
    <property type="term" value="F:cytokine activity"/>
    <property type="evidence" value="ECO:0007669"/>
    <property type="project" value="UniProtKB-KW"/>
</dbReference>
<dbReference type="GO" id="GO:0008083">
    <property type="term" value="F:growth factor activity"/>
    <property type="evidence" value="ECO:0007669"/>
    <property type="project" value="UniProtKB-KW"/>
</dbReference>
<dbReference type="GO" id="GO:0005138">
    <property type="term" value="F:interleukin-6 receptor binding"/>
    <property type="evidence" value="ECO:0007669"/>
    <property type="project" value="InterPro"/>
</dbReference>
<dbReference type="GO" id="GO:0006953">
    <property type="term" value="P:acute-phase response"/>
    <property type="evidence" value="ECO:0007669"/>
    <property type="project" value="UniProtKB-KW"/>
</dbReference>
<dbReference type="GO" id="GO:0042593">
    <property type="term" value="P:glucose homeostasis"/>
    <property type="evidence" value="ECO:0000250"/>
    <property type="project" value="UniProtKB"/>
</dbReference>
<dbReference type="GO" id="GO:0072574">
    <property type="term" value="P:hepatocyte proliferation"/>
    <property type="evidence" value="ECO:0000250"/>
    <property type="project" value="UniProtKB"/>
</dbReference>
<dbReference type="GO" id="GO:0070102">
    <property type="term" value="P:interleukin-6-mediated signaling pathway"/>
    <property type="evidence" value="ECO:0000250"/>
    <property type="project" value="UniProtKB"/>
</dbReference>
<dbReference type="GO" id="GO:0097421">
    <property type="term" value="P:liver regeneration"/>
    <property type="evidence" value="ECO:0000250"/>
    <property type="project" value="UniProtKB"/>
</dbReference>
<dbReference type="GO" id="GO:0051240">
    <property type="term" value="P:positive regulation of multicellular organismal process"/>
    <property type="evidence" value="ECO:0007669"/>
    <property type="project" value="UniProtKB-ARBA"/>
</dbReference>
<dbReference type="GO" id="GO:0046427">
    <property type="term" value="P:positive regulation of receptor signaling pathway via JAK-STAT"/>
    <property type="evidence" value="ECO:0007669"/>
    <property type="project" value="TreeGrafter"/>
</dbReference>
<dbReference type="GO" id="GO:1904894">
    <property type="term" value="P:positive regulation of receptor signaling pathway via STAT"/>
    <property type="evidence" value="ECO:0000250"/>
    <property type="project" value="UniProtKB"/>
</dbReference>
<dbReference type="GO" id="GO:0070092">
    <property type="term" value="P:regulation of glucagon secretion"/>
    <property type="evidence" value="ECO:0000250"/>
    <property type="project" value="UniProtKB"/>
</dbReference>
<dbReference type="GO" id="GO:0050796">
    <property type="term" value="P:regulation of insulin secretion"/>
    <property type="evidence" value="ECO:0000250"/>
    <property type="project" value="UniProtKB"/>
</dbReference>
<dbReference type="GO" id="GO:0014823">
    <property type="term" value="P:response to activity"/>
    <property type="evidence" value="ECO:0000250"/>
    <property type="project" value="UniProtKB"/>
</dbReference>
<dbReference type="GO" id="GO:0072540">
    <property type="term" value="P:T-helper 17 cell lineage commitment"/>
    <property type="evidence" value="ECO:0000250"/>
    <property type="project" value="UniProtKB"/>
</dbReference>
<dbReference type="GO" id="GO:0010573">
    <property type="term" value="P:vascular endothelial growth factor production"/>
    <property type="evidence" value="ECO:0000250"/>
    <property type="project" value="UniProtKB"/>
</dbReference>
<dbReference type="FunFam" id="1.20.1250.10:FF:000006">
    <property type="entry name" value="Interleukin-6"/>
    <property type="match status" value="1"/>
</dbReference>
<dbReference type="Gene3D" id="1.20.1250.10">
    <property type="match status" value="1"/>
</dbReference>
<dbReference type="InterPro" id="IPR009079">
    <property type="entry name" value="4_helix_cytokine-like_core"/>
</dbReference>
<dbReference type="InterPro" id="IPR003574">
    <property type="entry name" value="IL-6-like"/>
</dbReference>
<dbReference type="InterPro" id="IPR030474">
    <property type="entry name" value="IL-6/GCSF/MGF"/>
</dbReference>
<dbReference type="InterPro" id="IPR030473">
    <property type="entry name" value="IL6/GCSF/MGF_CS"/>
</dbReference>
<dbReference type="PANTHER" id="PTHR48494">
    <property type="entry name" value="INTERLEUKIN-6"/>
    <property type="match status" value="1"/>
</dbReference>
<dbReference type="PANTHER" id="PTHR48494:SF1">
    <property type="entry name" value="INTERLEUKIN-6"/>
    <property type="match status" value="1"/>
</dbReference>
<dbReference type="Pfam" id="PF00489">
    <property type="entry name" value="IL6"/>
    <property type="match status" value="1"/>
</dbReference>
<dbReference type="PIRSF" id="PIRSF001935">
    <property type="entry name" value="IL6_MGF_GCSF"/>
    <property type="match status" value="1"/>
</dbReference>
<dbReference type="PRINTS" id="PR00433">
    <property type="entry name" value="IL6GCSFMGF"/>
</dbReference>
<dbReference type="PRINTS" id="PR00434">
    <property type="entry name" value="INTERLEUKIN6"/>
</dbReference>
<dbReference type="SMART" id="SM00126">
    <property type="entry name" value="IL6"/>
    <property type="match status" value="1"/>
</dbReference>
<dbReference type="SUPFAM" id="SSF47266">
    <property type="entry name" value="4-helical cytokines"/>
    <property type="match status" value="1"/>
</dbReference>
<dbReference type="PROSITE" id="PS00254">
    <property type="entry name" value="INTERLEUKIN_6"/>
    <property type="match status" value="1"/>
</dbReference>
<feature type="signal peptide" evidence="1">
    <location>
        <begin position="1" status="less than"/>
        <end position="21"/>
    </location>
</feature>
<feature type="chain" id="PRO_0000015589" description="Interleukin-6">
    <location>
        <begin position="22"/>
        <end position="205"/>
    </location>
</feature>
<feature type="modified residue" description="Phosphoserine" evidence="2">
    <location>
        <position position="73"/>
    </location>
</feature>
<feature type="glycosylation site" description="N-linked (GlcNAc...) asparagine" evidence="4">
    <location>
        <position position="164"/>
    </location>
</feature>
<feature type="disulfide bond" evidence="1">
    <location>
        <begin position="64"/>
        <end position="70"/>
    </location>
</feature>
<feature type="disulfide bond" evidence="1">
    <location>
        <begin position="93"/>
        <end position="103"/>
    </location>
</feature>
<feature type="non-terminal residue">
    <location>
        <position position="1"/>
    </location>
</feature>
<keyword id="KW-0011">Acute phase</keyword>
<keyword id="KW-0202">Cytokine</keyword>
<keyword id="KW-1015">Disulfide bond</keyword>
<keyword id="KW-0325">Glycoprotein</keyword>
<keyword id="KW-0339">Growth factor</keyword>
<keyword id="KW-0597">Phosphoprotein</keyword>
<keyword id="KW-0964">Secreted</keyword>
<keyword id="KW-0732">Signal</keyword>
<accession>Q28747</accession>
<comment type="function">
    <text evidence="2">Cytokine with a wide variety of biological functions in immunity, tissue regeneration, and metabolism. Binds to IL6R, then the complex associates to the signaling subunit IL6ST/gp130 to trigger the intracellular IL6-signaling pathway. The interaction with the membrane-bound IL6R and IL6ST stimulates 'classic signaling', whereas the binding of IL6 and soluble IL6R to IL6ST stimulates 'trans-signaling'. Alternatively, 'cluster signaling' occurs when membrane-bound IL6:IL6R complexes on transmitter cells activate IL6ST receptors on neighboring receiver cells.</text>
</comment>
<comment type="function">
    <text evidence="2 3">IL6 is a potent inducer of the acute phase response. Rapid production of IL6 contributes to host defense during infection and tissue injury, but excessive IL6 synthesis is involved in disease pathology. In the innate immune response, is synthesized by myeloid cells, such as macrophages and dendritic cells, upon recognition of pathogens through toll-like receptors (TLRs) at the site of infection or tissue injury (By similarity). In the adaptive immune response, is required for the differentiation of B cells into immunoglobulin-secreting cells. Plays a major role in the differentiation of CD4(+) T cell subsets. Essential factor for the development of T follicular helper (Tfh) cells that are required for the induction of germinal-center formation. Required to drive naive CD4(+) T cells to the Th17 lineage. Also required for proliferation of myeloma cells and the survival of plasmablast cells (By similarity).</text>
</comment>
<comment type="function">
    <text evidence="2 3">Acts as an essential factor in bone homeostasis and on vessels directly or indirectly by induction of VEGF, resulting in increased angiogenesis activity and vascular permeability. Induces, through 'trans-signaling' and synergistically with IL1B and TNF, the production of VEGF. Involved in metabolic controls, is discharged into the bloodstream after muscle contraction increasing lipolysis and improving insulin resistance (By similarity). 'Trans-signaling' in central nervous system also regulates energy and glucose homeostasis. Mediates, through GLP-1, crosstalk between insulin-sensitive tissues, intestinal L cells and pancreatic islets to adapt to changes in insulin demand (By similarity). Also acts as a myokine (By similarity). Plays a protective role during liver injury, being required for maintenance of tissue regeneration (By similarity). Also has a pivotal role in iron metabolism by regulating HAMP/hepcidin expression upon inflammation or bacterial infection (By similarity). Through activation of IL6ST-YAP-NOTCH pathway, induces inflammation-induced epithelial regeneration (By similarity).</text>
</comment>
<comment type="subunit">
    <text evidence="2">Component of a hexamer of two molecules each of IL6, IL6R and IL6ST; first binds to IL6R to associate with the signaling subunit IL6ST. Interacts with IL6R (via the N-terminal ectodomain); this interaction may be affected by IL6R-binding with SORL1, hence decreasing IL6 cis signaling. Interacts with SORL1 (via the N-terminal ectodomain); this interaction leads to IL6 internalization and lysosomal degradation. May form a trimeric complex with the soluble SORL1 ectodomain and soluble IL6R receptor; this interaction might stabilize circulating IL6, hence promoting IL6 trans signaling.</text>
</comment>
<comment type="subcellular location">
    <subcellularLocation>
        <location evidence="2">Secreted</location>
    </subcellularLocation>
</comment>
<comment type="similarity">
    <text evidence="5">Belongs to the IL-6 superfamily.</text>
</comment>
<protein>
    <recommendedName>
        <fullName>Interleukin-6</fullName>
        <shortName>IL-6</shortName>
    </recommendedName>
</protein>
<proteinExistence type="evidence at transcript level"/>
<gene>
    <name type="primary">IL6</name>
</gene>
<organism>
    <name type="scientific">Orcinus orca</name>
    <name type="common">Killer whale</name>
    <name type="synonym">Delphinus orca</name>
    <dbReference type="NCBI Taxonomy" id="9733"/>
    <lineage>
        <taxon>Eukaryota</taxon>
        <taxon>Metazoa</taxon>
        <taxon>Chordata</taxon>
        <taxon>Craniata</taxon>
        <taxon>Vertebrata</taxon>
        <taxon>Euteleostomi</taxon>
        <taxon>Mammalia</taxon>
        <taxon>Eutheria</taxon>
        <taxon>Laurasiatheria</taxon>
        <taxon>Artiodactyla</taxon>
        <taxon>Whippomorpha</taxon>
        <taxon>Cetacea</taxon>
        <taxon>Odontoceti</taxon>
        <taxon>Delphinidae</taxon>
        <taxon>Orcinus</taxon>
    </lineage>
</organism>
<evidence type="ECO:0000250" key="1"/>
<evidence type="ECO:0000250" key="2">
    <source>
        <dbReference type="UniProtKB" id="P05231"/>
    </source>
</evidence>
<evidence type="ECO:0000250" key="3">
    <source>
        <dbReference type="UniProtKB" id="P08505"/>
    </source>
</evidence>
<evidence type="ECO:0000255" key="4"/>
<evidence type="ECO:0000305" key="5"/>
<name>IL6_ORCOR</name>